<comment type="function">
    <text evidence="1">Has a role as neurotrophic factor involved in neuronal survival and neurobiological functions.</text>
</comment>
<comment type="subcellular location">
    <subcellularLocation>
        <location evidence="3">Cytoplasm</location>
    </subcellularLocation>
    <subcellularLocation>
        <location evidence="1">Nucleus</location>
    </subcellularLocation>
</comment>
<comment type="alternative products">
    <event type="alternative splicing"/>
    <isoform>
        <id>Q8N3H0-1</id>
        <name>1</name>
        <sequence type="displayed"/>
    </isoform>
    <isoform>
        <id>Q8N3H0-2</id>
        <name>2</name>
        <sequence type="described" ref="VSP_016066"/>
    </isoform>
</comment>
<comment type="tissue specificity">
    <text evidence="3">Brain-specific.</text>
</comment>
<comment type="similarity">
    <text evidence="5">Belongs to the TAFA family.</text>
</comment>
<gene>
    <name evidence="6" type="primary">TAFA2</name>
    <name evidence="6" type="synonym">FAM19A2</name>
</gene>
<sequence>MSKRYLQKATKGKLLIIIFIVTLWGKVVSSANHHKAHHVKTGTCEVVALHRCCNKNKIEERSQTVKCSCFPGQVAGTTRAAPSCVDASIVEQKWWCHMQPCLEGEECKVLPDRKGWSCSSGNKVKTTRVTH</sequence>
<accession>Q8N3H0</accession>
<accession>B3KVV4</accession>
<accession>Q4G0R9</accession>
<accession>Q68DK0</accession>
<accession>Q6GTX6</accession>
<proteinExistence type="evidence at protein level"/>
<reference key="1">
    <citation type="journal article" date="2004" name="Genomics">
        <title>TAFA: a novel secreted family with conserved cysteine residues and restricted expression in the brain.</title>
        <authorList>
            <person name="Tom Tang Y."/>
            <person name="Emtage P."/>
            <person name="Funk W.D."/>
            <person name="Hu T."/>
            <person name="Arterburn M."/>
            <person name="Park E.E."/>
            <person name="Rupp F."/>
        </authorList>
    </citation>
    <scope>NUCLEOTIDE SEQUENCE [MRNA] (ISOFORM 1)</scope>
    <scope>TISSUE SPECIFICITY</scope>
    <scope>SUBCELLULAR LOCATION</scope>
</reference>
<reference key="2">
    <citation type="journal article" date="2004" name="Nat. Genet.">
        <title>Complete sequencing and characterization of 21,243 full-length human cDNAs.</title>
        <authorList>
            <person name="Ota T."/>
            <person name="Suzuki Y."/>
            <person name="Nishikawa T."/>
            <person name="Otsuki T."/>
            <person name="Sugiyama T."/>
            <person name="Irie R."/>
            <person name="Wakamatsu A."/>
            <person name="Hayashi K."/>
            <person name="Sato H."/>
            <person name="Nagai K."/>
            <person name="Kimura K."/>
            <person name="Makita H."/>
            <person name="Sekine M."/>
            <person name="Obayashi M."/>
            <person name="Nishi T."/>
            <person name="Shibahara T."/>
            <person name="Tanaka T."/>
            <person name="Ishii S."/>
            <person name="Yamamoto J."/>
            <person name="Saito K."/>
            <person name="Kawai Y."/>
            <person name="Isono Y."/>
            <person name="Nakamura Y."/>
            <person name="Nagahari K."/>
            <person name="Murakami K."/>
            <person name="Yasuda T."/>
            <person name="Iwayanagi T."/>
            <person name="Wagatsuma M."/>
            <person name="Shiratori A."/>
            <person name="Sudo H."/>
            <person name="Hosoiri T."/>
            <person name="Kaku Y."/>
            <person name="Kodaira H."/>
            <person name="Kondo H."/>
            <person name="Sugawara M."/>
            <person name="Takahashi M."/>
            <person name="Kanda K."/>
            <person name="Yokoi T."/>
            <person name="Furuya T."/>
            <person name="Kikkawa E."/>
            <person name="Omura Y."/>
            <person name="Abe K."/>
            <person name="Kamihara K."/>
            <person name="Katsuta N."/>
            <person name="Sato K."/>
            <person name="Tanikawa M."/>
            <person name="Yamazaki M."/>
            <person name="Ninomiya K."/>
            <person name="Ishibashi T."/>
            <person name="Yamashita H."/>
            <person name="Murakawa K."/>
            <person name="Fujimori K."/>
            <person name="Tanai H."/>
            <person name="Kimata M."/>
            <person name="Watanabe M."/>
            <person name="Hiraoka S."/>
            <person name="Chiba Y."/>
            <person name="Ishida S."/>
            <person name="Ono Y."/>
            <person name="Takiguchi S."/>
            <person name="Watanabe S."/>
            <person name="Yosida M."/>
            <person name="Hotuta T."/>
            <person name="Kusano J."/>
            <person name="Kanehori K."/>
            <person name="Takahashi-Fujii A."/>
            <person name="Hara H."/>
            <person name="Tanase T.-O."/>
            <person name="Nomura Y."/>
            <person name="Togiya S."/>
            <person name="Komai F."/>
            <person name="Hara R."/>
            <person name="Takeuchi K."/>
            <person name="Arita M."/>
            <person name="Imose N."/>
            <person name="Musashino K."/>
            <person name="Yuuki H."/>
            <person name="Oshima A."/>
            <person name="Sasaki N."/>
            <person name="Aotsuka S."/>
            <person name="Yoshikawa Y."/>
            <person name="Matsunawa H."/>
            <person name="Ichihara T."/>
            <person name="Shiohata N."/>
            <person name="Sano S."/>
            <person name="Moriya S."/>
            <person name="Momiyama H."/>
            <person name="Satoh N."/>
            <person name="Takami S."/>
            <person name="Terashima Y."/>
            <person name="Suzuki O."/>
            <person name="Nakagawa S."/>
            <person name="Senoh A."/>
            <person name="Mizoguchi H."/>
            <person name="Goto Y."/>
            <person name="Shimizu F."/>
            <person name="Wakebe H."/>
            <person name="Hishigaki H."/>
            <person name="Watanabe T."/>
            <person name="Sugiyama A."/>
            <person name="Takemoto M."/>
            <person name="Kawakami B."/>
            <person name="Yamazaki M."/>
            <person name="Watanabe K."/>
            <person name="Kumagai A."/>
            <person name="Itakura S."/>
            <person name="Fukuzumi Y."/>
            <person name="Fujimori Y."/>
            <person name="Komiyama M."/>
            <person name="Tashiro H."/>
            <person name="Tanigami A."/>
            <person name="Fujiwara T."/>
            <person name="Ono T."/>
            <person name="Yamada K."/>
            <person name="Fujii Y."/>
            <person name="Ozaki K."/>
            <person name="Hirao M."/>
            <person name="Ohmori Y."/>
            <person name="Kawabata A."/>
            <person name="Hikiji T."/>
            <person name="Kobatake N."/>
            <person name="Inagaki H."/>
            <person name="Ikema Y."/>
            <person name="Okamoto S."/>
            <person name="Okitani R."/>
            <person name="Kawakami T."/>
            <person name="Noguchi S."/>
            <person name="Itoh T."/>
            <person name="Shigeta K."/>
            <person name="Senba T."/>
            <person name="Matsumura K."/>
            <person name="Nakajima Y."/>
            <person name="Mizuno T."/>
            <person name="Morinaga M."/>
            <person name="Sasaki M."/>
            <person name="Togashi T."/>
            <person name="Oyama M."/>
            <person name="Hata H."/>
            <person name="Watanabe M."/>
            <person name="Komatsu T."/>
            <person name="Mizushima-Sugano J."/>
            <person name="Satoh T."/>
            <person name="Shirai Y."/>
            <person name="Takahashi Y."/>
            <person name="Nakagawa K."/>
            <person name="Okumura K."/>
            <person name="Nagase T."/>
            <person name="Nomura N."/>
            <person name="Kikuchi H."/>
            <person name="Masuho Y."/>
            <person name="Yamashita R."/>
            <person name="Nakai K."/>
            <person name="Yada T."/>
            <person name="Nakamura Y."/>
            <person name="Ohara O."/>
            <person name="Isogai T."/>
            <person name="Sugano S."/>
        </authorList>
    </citation>
    <scope>NUCLEOTIDE SEQUENCE [LARGE SCALE MRNA] (ISOFORM 1)</scope>
    <source>
        <tissue>Tongue</tissue>
    </source>
</reference>
<reference key="3">
    <citation type="journal article" date="2007" name="BMC Genomics">
        <title>The full-ORF clone resource of the German cDNA consortium.</title>
        <authorList>
            <person name="Bechtel S."/>
            <person name="Rosenfelder H."/>
            <person name="Duda A."/>
            <person name="Schmidt C.P."/>
            <person name="Ernst U."/>
            <person name="Wellenreuther R."/>
            <person name="Mehrle A."/>
            <person name="Schuster C."/>
            <person name="Bahr A."/>
            <person name="Bloecker H."/>
            <person name="Heubner D."/>
            <person name="Hoerlein A."/>
            <person name="Michel G."/>
            <person name="Wedler H."/>
            <person name="Koehrer K."/>
            <person name="Ottenwaelder B."/>
            <person name="Poustka A."/>
            <person name="Wiemann S."/>
            <person name="Schupp I."/>
        </authorList>
    </citation>
    <scope>NUCLEOTIDE SEQUENCE [LARGE SCALE MRNA] (ISOFORM 1)</scope>
    <source>
        <tissue>Amygdala</tissue>
        <tissue>Retina</tissue>
    </source>
</reference>
<reference key="4">
    <citation type="submission" date="2005-07" db="EMBL/GenBank/DDBJ databases">
        <authorList>
            <person name="Mural R.J."/>
            <person name="Istrail S."/>
            <person name="Sutton G.G."/>
            <person name="Florea L."/>
            <person name="Halpern A.L."/>
            <person name="Mobarry C.M."/>
            <person name="Lippert R."/>
            <person name="Walenz B."/>
            <person name="Shatkay H."/>
            <person name="Dew I."/>
            <person name="Miller J.R."/>
            <person name="Flanigan M.J."/>
            <person name="Edwards N.J."/>
            <person name="Bolanos R."/>
            <person name="Fasulo D."/>
            <person name="Halldorsson B.V."/>
            <person name="Hannenhalli S."/>
            <person name="Turner R."/>
            <person name="Yooseph S."/>
            <person name="Lu F."/>
            <person name="Nusskern D.R."/>
            <person name="Shue B.C."/>
            <person name="Zheng X.H."/>
            <person name="Zhong F."/>
            <person name="Delcher A.L."/>
            <person name="Huson D.H."/>
            <person name="Kravitz S.A."/>
            <person name="Mouchard L."/>
            <person name="Reinert K."/>
            <person name="Remington K.A."/>
            <person name="Clark A.G."/>
            <person name="Waterman M.S."/>
            <person name="Eichler E.E."/>
            <person name="Adams M.D."/>
            <person name="Hunkapiller M.W."/>
            <person name="Myers E.W."/>
            <person name="Venter J.C."/>
        </authorList>
    </citation>
    <scope>NUCLEOTIDE SEQUENCE [LARGE SCALE GENOMIC DNA]</scope>
</reference>
<reference key="5">
    <citation type="journal article" date="2004" name="Genome Res.">
        <title>The status, quality, and expansion of the NIH full-length cDNA project: the Mammalian Gene Collection (MGC).</title>
        <authorList>
            <consortium name="The MGC Project Team"/>
        </authorList>
    </citation>
    <scope>NUCLEOTIDE SEQUENCE [LARGE SCALE MRNA] (ISOFORMS 1 AND 2)</scope>
    <source>
        <tissue>Brain</tissue>
    </source>
</reference>
<evidence type="ECO:0000250" key="1">
    <source>
        <dbReference type="UniProtKB" id="Q7TPG7"/>
    </source>
</evidence>
<evidence type="ECO:0000255" key="2"/>
<evidence type="ECO:0000269" key="3">
    <source>
    </source>
</evidence>
<evidence type="ECO:0000303" key="4">
    <source>
    </source>
</evidence>
<evidence type="ECO:0000305" key="5"/>
<evidence type="ECO:0000312" key="6">
    <source>
        <dbReference type="HGNC" id="HGNC:21589"/>
    </source>
</evidence>
<feature type="signal peptide" evidence="2">
    <location>
        <begin position="1"/>
        <end position="30"/>
    </location>
</feature>
<feature type="chain" id="PRO_0000042723" description="Chemokine-like protein TAFA-2">
    <location>
        <begin position="31"/>
        <end position="131"/>
    </location>
</feature>
<feature type="splice variant" id="VSP_016066" description="In isoform 2." evidence="4">
    <location>
        <begin position="1"/>
        <end position="97"/>
    </location>
</feature>
<feature type="sequence conflict" description="In Ref. 5; AAH28403." evidence="5" ref="5">
    <original>C</original>
    <variation>Y</variation>
    <location>
        <position position="52"/>
    </location>
</feature>
<feature type="sequence conflict" description="In Ref. 5; AAH28403." evidence="5" ref="5">
    <original>C</original>
    <variation>Y</variation>
    <location>
        <position position="67"/>
    </location>
</feature>
<feature type="sequence conflict" description="In Ref. 3; CAH18220." evidence="5" ref="3">
    <original>VTH</original>
    <variation>ANV</variation>
    <location>
        <begin position="129"/>
        <end position="131"/>
    </location>
</feature>
<organism>
    <name type="scientific">Homo sapiens</name>
    <name type="common">Human</name>
    <dbReference type="NCBI Taxonomy" id="9606"/>
    <lineage>
        <taxon>Eukaryota</taxon>
        <taxon>Metazoa</taxon>
        <taxon>Chordata</taxon>
        <taxon>Craniata</taxon>
        <taxon>Vertebrata</taxon>
        <taxon>Euteleostomi</taxon>
        <taxon>Mammalia</taxon>
        <taxon>Eutheria</taxon>
        <taxon>Euarchontoglires</taxon>
        <taxon>Primates</taxon>
        <taxon>Haplorrhini</taxon>
        <taxon>Catarrhini</taxon>
        <taxon>Hominidae</taxon>
        <taxon>Homo</taxon>
    </lineage>
</organism>
<keyword id="KW-0025">Alternative splicing</keyword>
<keyword id="KW-0963">Cytoplasm</keyword>
<keyword id="KW-0539">Nucleus</keyword>
<keyword id="KW-1267">Proteomics identification</keyword>
<keyword id="KW-1185">Reference proteome</keyword>
<keyword id="KW-0732">Signal</keyword>
<protein>
    <recommendedName>
        <fullName evidence="5">Chemokine-like protein TAFA-2</fullName>
    </recommendedName>
</protein>
<name>TAFA2_HUMAN</name>
<dbReference type="EMBL" id="AY325115">
    <property type="protein sequence ID" value="AAP92407.1"/>
    <property type="molecule type" value="mRNA"/>
</dbReference>
<dbReference type="EMBL" id="AK123580">
    <property type="protein sequence ID" value="BAG53916.1"/>
    <property type="molecule type" value="mRNA"/>
</dbReference>
<dbReference type="EMBL" id="AL834160">
    <property type="protein sequence ID" value="CAD38865.1"/>
    <property type="molecule type" value="mRNA"/>
</dbReference>
<dbReference type="EMBL" id="CR749367">
    <property type="protein sequence ID" value="CAH18220.1"/>
    <property type="molecule type" value="mRNA"/>
</dbReference>
<dbReference type="EMBL" id="CH471054">
    <property type="protein sequence ID" value="EAW97100.1"/>
    <property type="molecule type" value="Genomic_DNA"/>
</dbReference>
<dbReference type="EMBL" id="BC028403">
    <property type="protein sequence ID" value="AAH28403.1"/>
    <property type="molecule type" value="mRNA"/>
</dbReference>
<dbReference type="EMBL" id="BC040286">
    <property type="protein sequence ID" value="AAH40286.1"/>
    <property type="molecule type" value="mRNA"/>
</dbReference>
<dbReference type="CCDS" id="CCDS8962.1">
    <molecule id="Q8N3H0-1"/>
</dbReference>
<dbReference type="RefSeq" id="NP_848634.1">
    <molecule id="Q8N3H0-1"/>
    <property type="nucleotide sequence ID" value="NM_178539.5"/>
</dbReference>
<dbReference type="RefSeq" id="XP_006719433.1">
    <property type="nucleotide sequence ID" value="XM_006719370.2"/>
</dbReference>
<dbReference type="RefSeq" id="XP_011536574.1">
    <property type="nucleotide sequence ID" value="XM_011538272.1"/>
</dbReference>
<dbReference type="RefSeq" id="XP_011536576.1">
    <property type="nucleotide sequence ID" value="XM_011538274.1"/>
</dbReference>
<dbReference type="RefSeq" id="XP_024304733.1">
    <molecule id="Q8N3H0-1"/>
    <property type="nucleotide sequence ID" value="XM_024448965.2"/>
</dbReference>
<dbReference type="RefSeq" id="XP_024304734.1">
    <molecule id="Q8N3H0-1"/>
    <property type="nucleotide sequence ID" value="XM_024448966.2"/>
</dbReference>
<dbReference type="RefSeq" id="XP_047284729.1">
    <molecule id="Q8N3H0-1"/>
    <property type="nucleotide sequence ID" value="XM_047428773.1"/>
</dbReference>
<dbReference type="RefSeq" id="XP_047284730.1">
    <molecule id="Q8N3H0-1"/>
    <property type="nucleotide sequence ID" value="XM_047428774.1"/>
</dbReference>
<dbReference type="RefSeq" id="XP_054227907.1">
    <molecule id="Q8N3H0-1"/>
    <property type="nucleotide sequence ID" value="XM_054371932.1"/>
</dbReference>
<dbReference type="RefSeq" id="XP_054227908.1">
    <molecule id="Q8N3H0-1"/>
    <property type="nucleotide sequence ID" value="XM_054371933.1"/>
</dbReference>
<dbReference type="BioGRID" id="130801">
    <property type="interactions" value="52"/>
</dbReference>
<dbReference type="FunCoup" id="Q8N3H0">
    <property type="interactions" value="918"/>
</dbReference>
<dbReference type="IntAct" id="Q8N3H0">
    <property type="interactions" value="38"/>
</dbReference>
<dbReference type="STRING" id="9606.ENSP00000393987"/>
<dbReference type="PhosphoSitePlus" id="Q8N3H0"/>
<dbReference type="BioMuta" id="FAM19A2"/>
<dbReference type="DMDM" id="74714846"/>
<dbReference type="MassIVE" id="Q8N3H0"/>
<dbReference type="PaxDb" id="9606-ENSP00000393987"/>
<dbReference type="PeptideAtlas" id="Q8N3H0"/>
<dbReference type="ProteomicsDB" id="71803">
    <molecule id="Q8N3H0-1"/>
</dbReference>
<dbReference type="Antibodypedia" id="56101">
    <property type="antibodies" value="33 antibodies from 14 providers"/>
</dbReference>
<dbReference type="DNASU" id="338811"/>
<dbReference type="Ensembl" id="ENST00000416284.8">
    <molecule id="Q8N3H0-1"/>
    <property type="protein sequence ID" value="ENSP00000393987.3"/>
    <property type="gene ID" value="ENSG00000198673.11"/>
</dbReference>
<dbReference type="Ensembl" id="ENST00000550003.1">
    <molecule id="Q8N3H0-2"/>
    <property type="protein sequence ID" value="ENSP00000449457.1"/>
    <property type="gene ID" value="ENSG00000198673.11"/>
</dbReference>
<dbReference type="Ensembl" id="ENST00000551619.5">
    <molecule id="Q8N3H0-1"/>
    <property type="protein sequence ID" value="ENSP00000447305.1"/>
    <property type="gene ID" value="ENSG00000198673.11"/>
</dbReference>
<dbReference type="GeneID" id="338811"/>
<dbReference type="KEGG" id="hsa:338811"/>
<dbReference type="MANE-Select" id="ENST00000416284.8">
    <property type="protein sequence ID" value="ENSP00000393987.3"/>
    <property type="RefSeq nucleotide sequence ID" value="NM_178539.5"/>
    <property type="RefSeq protein sequence ID" value="NP_848634.1"/>
</dbReference>
<dbReference type="UCSC" id="uc001sqw.4">
    <molecule id="Q8N3H0-1"/>
    <property type="organism name" value="human"/>
</dbReference>
<dbReference type="AGR" id="HGNC:21589"/>
<dbReference type="CTD" id="338811"/>
<dbReference type="DisGeNET" id="338811"/>
<dbReference type="GeneCards" id="TAFA2"/>
<dbReference type="HGNC" id="HGNC:21589">
    <property type="gene designation" value="TAFA2"/>
</dbReference>
<dbReference type="HPA" id="ENSG00000198673">
    <property type="expression patterns" value="Tissue enhanced (brain)"/>
</dbReference>
<dbReference type="MIM" id="617496">
    <property type="type" value="gene"/>
</dbReference>
<dbReference type="neXtProt" id="NX_Q8N3H0"/>
<dbReference type="OpenTargets" id="ENSG00000198673"/>
<dbReference type="PharmGKB" id="PA134974674"/>
<dbReference type="VEuPathDB" id="HostDB:ENSG00000198673"/>
<dbReference type="eggNOG" id="ENOG502S0VQ">
    <property type="taxonomic scope" value="Eukaryota"/>
</dbReference>
<dbReference type="GeneTree" id="ENSGT00940000161214"/>
<dbReference type="HOGENOM" id="CLU_126078_1_0_1"/>
<dbReference type="InParanoid" id="Q8N3H0"/>
<dbReference type="OMA" id="VEMEIHR"/>
<dbReference type="OrthoDB" id="9924724at2759"/>
<dbReference type="PAN-GO" id="Q8N3H0">
    <property type="GO annotations" value="2 GO annotations based on evolutionary models"/>
</dbReference>
<dbReference type="PhylomeDB" id="Q8N3H0"/>
<dbReference type="TreeFam" id="TF331749"/>
<dbReference type="PathwayCommons" id="Q8N3H0"/>
<dbReference type="BioGRID-ORCS" id="338811">
    <property type="hits" value="7 hits in 1148 CRISPR screens"/>
</dbReference>
<dbReference type="ChiTaRS" id="FAM19A2">
    <property type="organism name" value="human"/>
</dbReference>
<dbReference type="GenomeRNAi" id="338811"/>
<dbReference type="Pharos" id="Q8N3H0">
    <property type="development level" value="Tbio"/>
</dbReference>
<dbReference type="PRO" id="PR:Q8N3H0"/>
<dbReference type="Proteomes" id="UP000005640">
    <property type="component" value="Chromosome 12"/>
</dbReference>
<dbReference type="RNAct" id="Q8N3H0">
    <property type="molecule type" value="protein"/>
</dbReference>
<dbReference type="Bgee" id="ENSG00000198673">
    <property type="expression patterns" value="Expressed in secondary oocyte and 137 other cell types or tissues"/>
</dbReference>
<dbReference type="ExpressionAtlas" id="Q8N3H0">
    <property type="expression patterns" value="baseline and differential"/>
</dbReference>
<dbReference type="GO" id="GO:0005737">
    <property type="term" value="C:cytoplasm"/>
    <property type="evidence" value="ECO:0000250"/>
    <property type="project" value="UniProtKB"/>
</dbReference>
<dbReference type="GO" id="GO:0005615">
    <property type="term" value="C:extracellular space"/>
    <property type="evidence" value="ECO:0000318"/>
    <property type="project" value="GO_Central"/>
</dbReference>
<dbReference type="GO" id="GO:0005634">
    <property type="term" value="C:nucleus"/>
    <property type="evidence" value="ECO:0000250"/>
    <property type="project" value="UniProtKB"/>
</dbReference>
<dbReference type="GO" id="GO:0048018">
    <property type="term" value="F:receptor ligand activity"/>
    <property type="evidence" value="ECO:0000318"/>
    <property type="project" value="GO_Central"/>
</dbReference>
<dbReference type="GO" id="GO:0007613">
    <property type="term" value="P:memory"/>
    <property type="evidence" value="ECO:0000250"/>
    <property type="project" value="UniProtKB"/>
</dbReference>
<dbReference type="GO" id="GO:0008542">
    <property type="term" value="P:visual learning"/>
    <property type="evidence" value="ECO:0000250"/>
    <property type="project" value="UniProtKB"/>
</dbReference>
<dbReference type="InterPro" id="IPR020350">
    <property type="entry name" value="Chemokine-like_TAFA"/>
</dbReference>
<dbReference type="InterPro" id="IPR051743">
    <property type="entry name" value="TAFA_chemokine-like"/>
</dbReference>
<dbReference type="PANTHER" id="PTHR31770">
    <property type="entry name" value="CHEMOKINE-LIKE PROTEIN TAFA FAMILY MEMBER"/>
    <property type="match status" value="1"/>
</dbReference>
<dbReference type="PANTHER" id="PTHR31770:SF1">
    <property type="entry name" value="CHEMOKINE-LIKE PROTEIN TAFA-2"/>
    <property type="match status" value="1"/>
</dbReference>
<dbReference type="Pfam" id="PF12020">
    <property type="entry name" value="TAFA"/>
    <property type="match status" value="1"/>
</dbReference>